<accession>Q7SXF6</accession>
<accession>Q5RFU8</accession>
<keyword id="KW-0106">Calcium</keyword>
<keyword id="KW-1015">Disulfide bond</keyword>
<keyword id="KW-0245">EGF-like domain</keyword>
<keyword id="KW-0256">Endoplasmic reticulum</keyword>
<keyword id="KW-0325">Glycoprotein</keyword>
<keyword id="KW-1185">Reference proteome</keyword>
<keyword id="KW-0677">Repeat</keyword>
<keyword id="KW-0964">Secreted</keyword>
<keyword id="KW-0732">Signal</keyword>
<evidence type="ECO:0000250" key="1"/>
<evidence type="ECO:0000255" key="2"/>
<evidence type="ECO:0000255" key="3">
    <source>
        <dbReference type="PROSITE-ProRule" id="PRU00076"/>
    </source>
</evidence>
<evidence type="ECO:0000305" key="4"/>
<gene>
    <name type="primary">creld2</name>
    <name type="ORF">zgc:66383</name>
</gene>
<comment type="function">
    <text evidence="1">Possible role in neuronal acetylcholine receptor transport.</text>
</comment>
<comment type="subcellular location">
    <subcellularLocation>
        <location>Secreted</location>
    </subcellularLocation>
    <subcellularLocation>
        <location evidence="1">Endoplasmic reticulum</location>
    </subcellularLocation>
</comment>
<comment type="similarity">
    <text evidence="4">Belongs to the CRELD family.</text>
</comment>
<dbReference type="EMBL" id="CR751234">
    <property type="protein sequence ID" value="CAI20713.1"/>
    <property type="molecule type" value="Genomic_DNA"/>
</dbReference>
<dbReference type="EMBL" id="BC055626">
    <property type="protein sequence ID" value="AAH55626.1"/>
    <property type="molecule type" value="mRNA"/>
</dbReference>
<dbReference type="RefSeq" id="NP_956817.1">
    <property type="nucleotide sequence ID" value="NM_200523.1"/>
</dbReference>
<dbReference type="FunCoup" id="Q7SXF6">
    <property type="interactions" value="538"/>
</dbReference>
<dbReference type="STRING" id="7955.ENSDARP00000048382"/>
<dbReference type="GlyCosmos" id="Q7SXF6">
    <property type="glycosylation" value="1 site, No reported glycans"/>
</dbReference>
<dbReference type="PaxDb" id="7955-ENSDARP00000048382"/>
<dbReference type="PeptideAtlas" id="Q7SXF6"/>
<dbReference type="Ensembl" id="ENSDART00000048383">
    <property type="protein sequence ID" value="ENSDARP00000048382"/>
    <property type="gene ID" value="ENSDARG00000029071"/>
</dbReference>
<dbReference type="Ensembl" id="ENSDART00000193547">
    <property type="protein sequence ID" value="ENSDARP00000146751"/>
    <property type="gene ID" value="ENSDARG00000116264"/>
</dbReference>
<dbReference type="GeneID" id="393495"/>
<dbReference type="KEGG" id="dre:393495"/>
<dbReference type="AGR" id="ZFIN:ZDB-GENE-040426-1626"/>
<dbReference type="CTD" id="79174"/>
<dbReference type="ZFIN" id="ZDB-GENE-040426-1626">
    <property type="gene designation" value="creld2"/>
</dbReference>
<dbReference type="eggNOG" id="KOG4260">
    <property type="taxonomic scope" value="Eukaryota"/>
</dbReference>
<dbReference type="HOGENOM" id="CLU_038974_1_0_1"/>
<dbReference type="InParanoid" id="Q7SXF6"/>
<dbReference type="OMA" id="TDNFNKG"/>
<dbReference type="OrthoDB" id="19903at2759"/>
<dbReference type="PhylomeDB" id="Q7SXF6"/>
<dbReference type="TreeFam" id="TF316507"/>
<dbReference type="PRO" id="PR:Q7SXF6"/>
<dbReference type="Proteomes" id="UP000000437">
    <property type="component" value="Alternate scaffold 4"/>
</dbReference>
<dbReference type="Proteomes" id="UP000000437">
    <property type="component" value="Chromosome 4"/>
</dbReference>
<dbReference type="Bgee" id="ENSDARG00000029071">
    <property type="expression patterns" value="Expressed in tail and 22 other cell types or tissues"/>
</dbReference>
<dbReference type="GO" id="GO:0005783">
    <property type="term" value="C:endoplasmic reticulum"/>
    <property type="evidence" value="ECO:0007669"/>
    <property type="project" value="UniProtKB-SubCell"/>
</dbReference>
<dbReference type="GO" id="GO:0005576">
    <property type="term" value="C:extracellular region"/>
    <property type="evidence" value="ECO:0007669"/>
    <property type="project" value="UniProtKB-SubCell"/>
</dbReference>
<dbReference type="GO" id="GO:0005509">
    <property type="term" value="F:calcium ion binding"/>
    <property type="evidence" value="ECO:0007669"/>
    <property type="project" value="InterPro"/>
</dbReference>
<dbReference type="CDD" id="cd00064">
    <property type="entry name" value="FU"/>
    <property type="match status" value="1"/>
</dbReference>
<dbReference type="Gene3D" id="2.10.220.10">
    <property type="entry name" value="Hormone Receptor, Insulin-like Growth Factor Receptor 1, Chain A, domain 2"/>
    <property type="match status" value="1"/>
</dbReference>
<dbReference type="Gene3D" id="2.10.25.10">
    <property type="entry name" value="Laminin"/>
    <property type="match status" value="1"/>
</dbReference>
<dbReference type="InterPro" id="IPR021852">
    <property type="entry name" value="DUF3456"/>
</dbReference>
<dbReference type="InterPro" id="IPR001881">
    <property type="entry name" value="EGF-like_Ca-bd_dom"/>
</dbReference>
<dbReference type="InterPro" id="IPR000742">
    <property type="entry name" value="EGF-like_dom"/>
</dbReference>
<dbReference type="InterPro" id="IPR018097">
    <property type="entry name" value="EGF_Ca-bd_CS"/>
</dbReference>
<dbReference type="InterPro" id="IPR006212">
    <property type="entry name" value="Furin_repeat"/>
</dbReference>
<dbReference type="InterPro" id="IPR009030">
    <property type="entry name" value="Growth_fac_rcpt_cys_sf"/>
</dbReference>
<dbReference type="InterPro" id="IPR002049">
    <property type="entry name" value="LE_dom"/>
</dbReference>
<dbReference type="InterPro" id="IPR049883">
    <property type="entry name" value="NOTCH1_EGF-like"/>
</dbReference>
<dbReference type="PANTHER" id="PTHR24039:SF28">
    <property type="entry name" value="EGF-LIKE DOMAIN-CONTAINING PROTEIN"/>
    <property type="match status" value="1"/>
</dbReference>
<dbReference type="PANTHER" id="PTHR24039">
    <property type="entry name" value="FIBRILLIN-RELATED"/>
    <property type="match status" value="1"/>
</dbReference>
<dbReference type="Pfam" id="PF11938">
    <property type="entry name" value="DUF3456"/>
    <property type="match status" value="1"/>
</dbReference>
<dbReference type="Pfam" id="PF07645">
    <property type="entry name" value="EGF_CA"/>
    <property type="match status" value="2"/>
</dbReference>
<dbReference type="SMART" id="SM00179">
    <property type="entry name" value="EGF_CA"/>
    <property type="match status" value="2"/>
</dbReference>
<dbReference type="SMART" id="SM00261">
    <property type="entry name" value="FU"/>
    <property type="match status" value="2"/>
</dbReference>
<dbReference type="SUPFAM" id="SSF57184">
    <property type="entry name" value="Growth factor receptor domain"/>
    <property type="match status" value="1"/>
</dbReference>
<dbReference type="PROSITE" id="PS00022">
    <property type="entry name" value="EGF_1"/>
    <property type="match status" value="1"/>
</dbReference>
<dbReference type="PROSITE" id="PS01186">
    <property type="entry name" value="EGF_2"/>
    <property type="match status" value="1"/>
</dbReference>
<dbReference type="PROSITE" id="PS50026">
    <property type="entry name" value="EGF_3"/>
    <property type="match status" value="1"/>
</dbReference>
<dbReference type="PROSITE" id="PS01187">
    <property type="entry name" value="EGF_CA"/>
    <property type="match status" value="2"/>
</dbReference>
<proteinExistence type="evidence at transcript level"/>
<feature type="signal peptide" evidence="2">
    <location>
        <begin position="1"/>
        <end position="24"/>
    </location>
</feature>
<feature type="chain" id="PRO_0000256248" description="Cysteine-rich with EGF-like domain protein 2">
    <location>
        <begin position="25"/>
        <end position="341"/>
    </location>
</feature>
<feature type="domain" description="EGF-like" evidence="3">
    <location>
        <begin position="136"/>
        <end position="178"/>
    </location>
</feature>
<feature type="repeat" description="FU 1">
    <location>
        <begin position="193"/>
        <end position="248"/>
    </location>
</feature>
<feature type="repeat" description="FU 2">
    <location>
        <begin position="254"/>
        <end position="308"/>
    </location>
</feature>
<feature type="domain" description="EGF-like 2; calcium-binding; truncated" evidence="3">
    <location>
        <begin position="291"/>
        <end position="317"/>
    </location>
</feature>
<feature type="glycosylation site" description="N-linked (GlcNAc...) asparagine" evidence="2">
    <location>
        <position position="190"/>
    </location>
</feature>
<feature type="disulfide bond" evidence="3">
    <location>
        <begin position="140"/>
        <end position="154"/>
    </location>
</feature>
<feature type="disulfide bond" evidence="3">
    <location>
        <begin position="148"/>
        <end position="166"/>
    </location>
</feature>
<feature type="disulfide bond" evidence="3">
    <location>
        <begin position="168"/>
        <end position="177"/>
    </location>
</feature>
<feature type="sequence conflict" description="In Ref. 2; AAH55626." evidence="4" ref="2">
    <original>I</original>
    <variation>T</variation>
    <location>
        <position position="78"/>
    </location>
</feature>
<feature type="sequence conflict" description="In Ref. 2; AAH55626." evidence="4" ref="2">
    <original>F</original>
    <variation>S</variation>
    <location>
        <position position="194"/>
    </location>
</feature>
<organism>
    <name type="scientific">Danio rerio</name>
    <name type="common">Zebrafish</name>
    <name type="synonym">Brachydanio rerio</name>
    <dbReference type="NCBI Taxonomy" id="7955"/>
    <lineage>
        <taxon>Eukaryota</taxon>
        <taxon>Metazoa</taxon>
        <taxon>Chordata</taxon>
        <taxon>Craniata</taxon>
        <taxon>Vertebrata</taxon>
        <taxon>Euteleostomi</taxon>
        <taxon>Actinopterygii</taxon>
        <taxon>Neopterygii</taxon>
        <taxon>Teleostei</taxon>
        <taxon>Ostariophysi</taxon>
        <taxon>Cypriniformes</taxon>
        <taxon>Danionidae</taxon>
        <taxon>Danioninae</taxon>
        <taxon>Danio</taxon>
    </lineage>
</organism>
<sequence length="341" mass="37603">MLLSCSIFRLFCIILLLQLGSIYTKDFTALCSTCRQLVDDFDKGLEKTAKQNFGGGNTAWEERKLSKYETSEIRLTEILEGLCQSSNFECSHMLEENEEHLEAWWFKRKTKHPDLFKWFCIETIKVCCPKGSFGPDCNTCIGGADRPCHGNGKCDGDGTRAGNGKCSCDEGYDGEFCLDCSDGYFNSLRNDTFFLCKECHESCVGCSGGTNQHCKECRNGWVKDQEGSCIDINECIKDPAPCSDDQYCLNTDGSFSCKACDIRCTGCKGDGASSCLNCADGYKDEEGTCTDIDECTEDPASCSDNQHCLNTDGSFSCEEKVPAFNSEGAKTGDSPEKHEDL</sequence>
<protein>
    <recommendedName>
        <fullName>Cysteine-rich with EGF-like domain protein 2</fullName>
    </recommendedName>
</protein>
<name>CREL2_DANRE</name>
<reference key="1">
    <citation type="journal article" date="2013" name="Nature">
        <title>The zebrafish reference genome sequence and its relationship to the human genome.</title>
        <authorList>
            <person name="Howe K."/>
            <person name="Clark M.D."/>
            <person name="Torroja C.F."/>
            <person name="Torrance J."/>
            <person name="Berthelot C."/>
            <person name="Muffato M."/>
            <person name="Collins J.E."/>
            <person name="Humphray S."/>
            <person name="McLaren K."/>
            <person name="Matthews L."/>
            <person name="McLaren S."/>
            <person name="Sealy I."/>
            <person name="Caccamo M."/>
            <person name="Churcher C."/>
            <person name="Scott C."/>
            <person name="Barrett J.C."/>
            <person name="Koch R."/>
            <person name="Rauch G.J."/>
            <person name="White S."/>
            <person name="Chow W."/>
            <person name="Kilian B."/>
            <person name="Quintais L.T."/>
            <person name="Guerra-Assuncao J.A."/>
            <person name="Zhou Y."/>
            <person name="Gu Y."/>
            <person name="Yen J."/>
            <person name="Vogel J.H."/>
            <person name="Eyre T."/>
            <person name="Redmond S."/>
            <person name="Banerjee R."/>
            <person name="Chi J."/>
            <person name="Fu B."/>
            <person name="Langley E."/>
            <person name="Maguire S.F."/>
            <person name="Laird G.K."/>
            <person name="Lloyd D."/>
            <person name="Kenyon E."/>
            <person name="Donaldson S."/>
            <person name="Sehra H."/>
            <person name="Almeida-King J."/>
            <person name="Loveland J."/>
            <person name="Trevanion S."/>
            <person name="Jones M."/>
            <person name="Quail M."/>
            <person name="Willey D."/>
            <person name="Hunt A."/>
            <person name="Burton J."/>
            <person name="Sims S."/>
            <person name="McLay K."/>
            <person name="Plumb B."/>
            <person name="Davis J."/>
            <person name="Clee C."/>
            <person name="Oliver K."/>
            <person name="Clark R."/>
            <person name="Riddle C."/>
            <person name="Elliot D."/>
            <person name="Threadgold G."/>
            <person name="Harden G."/>
            <person name="Ware D."/>
            <person name="Begum S."/>
            <person name="Mortimore B."/>
            <person name="Kerry G."/>
            <person name="Heath P."/>
            <person name="Phillimore B."/>
            <person name="Tracey A."/>
            <person name="Corby N."/>
            <person name="Dunn M."/>
            <person name="Johnson C."/>
            <person name="Wood J."/>
            <person name="Clark S."/>
            <person name="Pelan S."/>
            <person name="Griffiths G."/>
            <person name="Smith M."/>
            <person name="Glithero R."/>
            <person name="Howden P."/>
            <person name="Barker N."/>
            <person name="Lloyd C."/>
            <person name="Stevens C."/>
            <person name="Harley J."/>
            <person name="Holt K."/>
            <person name="Panagiotidis G."/>
            <person name="Lovell J."/>
            <person name="Beasley H."/>
            <person name="Henderson C."/>
            <person name="Gordon D."/>
            <person name="Auger K."/>
            <person name="Wright D."/>
            <person name="Collins J."/>
            <person name="Raisen C."/>
            <person name="Dyer L."/>
            <person name="Leung K."/>
            <person name="Robertson L."/>
            <person name="Ambridge K."/>
            <person name="Leongamornlert D."/>
            <person name="McGuire S."/>
            <person name="Gilderthorp R."/>
            <person name="Griffiths C."/>
            <person name="Manthravadi D."/>
            <person name="Nichol S."/>
            <person name="Barker G."/>
            <person name="Whitehead S."/>
            <person name="Kay M."/>
            <person name="Brown J."/>
            <person name="Murnane C."/>
            <person name="Gray E."/>
            <person name="Humphries M."/>
            <person name="Sycamore N."/>
            <person name="Barker D."/>
            <person name="Saunders D."/>
            <person name="Wallis J."/>
            <person name="Babbage A."/>
            <person name="Hammond S."/>
            <person name="Mashreghi-Mohammadi M."/>
            <person name="Barr L."/>
            <person name="Martin S."/>
            <person name="Wray P."/>
            <person name="Ellington A."/>
            <person name="Matthews N."/>
            <person name="Ellwood M."/>
            <person name="Woodmansey R."/>
            <person name="Clark G."/>
            <person name="Cooper J."/>
            <person name="Tromans A."/>
            <person name="Grafham D."/>
            <person name="Skuce C."/>
            <person name="Pandian R."/>
            <person name="Andrews R."/>
            <person name="Harrison E."/>
            <person name="Kimberley A."/>
            <person name="Garnett J."/>
            <person name="Fosker N."/>
            <person name="Hall R."/>
            <person name="Garner P."/>
            <person name="Kelly D."/>
            <person name="Bird C."/>
            <person name="Palmer S."/>
            <person name="Gehring I."/>
            <person name="Berger A."/>
            <person name="Dooley C.M."/>
            <person name="Ersan-Urun Z."/>
            <person name="Eser C."/>
            <person name="Geiger H."/>
            <person name="Geisler M."/>
            <person name="Karotki L."/>
            <person name="Kirn A."/>
            <person name="Konantz J."/>
            <person name="Konantz M."/>
            <person name="Oberlander M."/>
            <person name="Rudolph-Geiger S."/>
            <person name="Teucke M."/>
            <person name="Lanz C."/>
            <person name="Raddatz G."/>
            <person name="Osoegawa K."/>
            <person name="Zhu B."/>
            <person name="Rapp A."/>
            <person name="Widaa S."/>
            <person name="Langford C."/>
            <person name="Yang F."/>
            <person name="Schuster S.C."/>
            <person name="Carter N.P."/>
            <person name="Harrow J."/>
            <person name="Ning Z."/>
            <person name="Herrero J."/>
            <person name="Searle S.M."/>
            <person name="Enright A."/>
            <person name="Geisler R."/>
            <person name="Plasterk R.H."/>
            <person name="Lee C."/>
            <person name="Westerfield M."/>
            <person name="de Jong P.J."/>
            <person name="Zon L.I."/>
            <person name="Postlethwait J.H."/>
            <person name="Nusslein-Volhard C."/>
            <person name="Hubbard T.J."/>
            <person name="Roest Crollius H."/>
            <person name="Rogers J."/>
            <person name="Stemple D.L."/>
        </authorList>
    </citation>
    <scope>NUCLEOTIDE SEQUENCE [LARGE SCALE GENOMIC DNA]</scope>
    <source>
        <strain>Tuebingen</strain>
    </source>
</reference>
<reference key="2">
    <citation type="submission" date="2003-08" db="EMBL/GenBank/DDBJ databases">
        <authorList>
            <consortium name="NIH - Zebrafish Gene Collection (ZGC) project"/>
        </authorList>
    </citation>
    <scope>NUCLEOTIDE SEQUENCE [LARGE SCALE MRNA]</scope>
    <source>
        <strain>SJD</strain>
    </source>
</reference>